<feature type="chain" id="PRO_0000428623" description="Mitogen-activated protein kinase kinase 7">
    <location>
        <begin position="1"/>
        <end position="307"/>
    </location>
</feature>
<feature type="domain" description="Protein kinase" evidence="4">
    <location>
        <begin position="45"/>
        <end position="303"/>
    </location>
</feature>
<feature type="active site" description="Proton acceptor" evidence="4 5">
    <location>
        <position position="165"/>
    </location>
</feature>
<feature type="binding site" evidence="4">
    <location>
        <begin position="51"/>
        <end position="59"/>
    </location>
    <ligand>
        <name>ATP</name>
        <dbReference type="ChEBI" id="CHEBI:30616"/>
    </ligand>
</feature>
<feature type="binding site" evidence="10">
    <location>
        <position position="74"/>
    </location>
    <ligand>
        <name>ATP</name>
        <dbReference type="ChEBI" id="CHEBI:30616"/>
    </ligand>
</feature>
<feature type="modified residue" description="Phosphoserine" evidence="2">
    <location>
        <position position="193"/>
    </location>
</feature>
<feature type="modified residue" description="Phosphoserine" evidence="3">
    <location>
        <position position="199"/>
    </location>
</feature>
<feature type="modified residue" description="Phosphothreonine" evidence="3">
    <location>
        <position position="203"/>
    </location>
</feature>
<feature type="mutagenesis site" description="Abolishes kinase activity." evidence="6">
    <original>K</original>
    <variation>R</variation>
    <location>
        <position position="74"/>
    </location>
</feature>
<keyword id="KW-0067">ATP-binding</keyword>
<keyword id="KW-0418">Kinase</keyword>
<keyword id="KW-0547">Nucleotide-binding</keyword>
<keyword id="KW-0597">Phosphoprotein</keyword>
<keyword id="KW-0611">Plant defense</keyword>
<keyword id="KW-1185">Reference proteome</keyword>
<keyword id="KW-0723">Serine/threonine-protein kinase</keyword>
<keyword id="KW-0808">Transferase</keyword>
<protein>
    <recommendedName>
        <fullName>Mitogen-activated protein kinase kinase 7</fullName>
        <shortName>AtMKK7</shortName>
        <shortName>MAP kinase kinase 7</shortName>
        <ecNumber>2.7.12.2</ecNumber>
    </recommendedName>
    <alternativeName>
        <fullName>Protein BUSHY AND DWARF 1</fullName>
    </alternativeName>
</protein>
<name>M2K7_ARATH</name>
<dbReference type="EC" id="2.7.12.2"/>
<dbReference type="EMBL" id="DQ185389">
    <property type="protein sequence ID" value="ABA70752.1"/>
    <property type="molecule type" value="mRNA"/>
</dbReference>
<dbReference type="EMBL" id="AC013354">
    <property type="protein sequence ID" value="AAF25995.1"/>
    <property type="molecule type" value="Genomic_DNA"/>
</dbReference>
<dbReference type="EMBL" id="CP002684">
    <property type="protein sequence ID" value="AEE29706.1"/>
    <property type="molecule type" value="Genomic_DNA"/>
</dbReference>
<dbReference type="EMBL" id="DQ446261">
    <property type="protein sequence ID" value="ABE65631.1"/>
    <property type="molecule type" value="mRNA"/>
</dbReference>
<dbReference type="EMBL" id="DQ652843">
    <property type="protein sequence ID" value="ABK28402.1"/>
    <property type="status" value="ALT_SEQ"/>
    <property type="molecule type" value="mRNA"/>
</dbReference>
<dbReference type="RefSeq" id="NP_173271.1">
    <property type="nucleotide sequence ID" value="NM_101693.3"/>
</dbReference>
<dbReference type="SMR" id="Q9LPQ3"/>
<dbReference type="BioGRID" id="23655">
    <property type="interactions" value="6"/>
</dbReference>
<dbReference type="DIP" id="DIP-52434N"/>
<dbReference type="FunCoup" id="Q9LPQ3">
    <property type="interactions" value="179"/>
</dbReference>
<dbReference type="IntAct" id="Q9LPQ3">
    <property type="interactions" value="9"/>
</dbReference>
<dbReference type="STRING" id="3702.Q9LPQ3"/>
<dbReference type="PaxDb" id="3702-AT1G18350.1"/>
<dbReference type="EnsemblPlants" id="AT1G18350.1">
    <property type="protein sequence ID" value="AT1G18350.1"/>
    <property type="gene ID" value="AT1G18350"/>
</dbReference>
<dbReference type="GeneID" id="838416"/>
<dbReference type="Gramene" id="AT1G18350.1">
    <property type="protein sequence ID" value="AT1G18350.1"/>
    <property type="gene ID" value="AT1G18350"/>
</dbReference>
<dbReference type="KEGG" id="ath:AT1G18350"/>
<dbReference type="Araport" id="AT1G18350"/>
<dbReference type="TAIR" id="AT1G18350">
    <property type="gene designation" value="MKK7"/>
</dbReference>
<dbReference type="eggNOG" id="KOG0581">
    <property type="taxonomic scope" value="Eukaryota"/>
</dbReference>
<dbReference type="HOGENOM" id="CLU_000288_63_23_1"/>
<dbReference type="InParanoid" id="Q9LPQ3"/>
<dbReference type="OMA" id="IVRCHAI"/>
<dbReference type="PhylomeDB" id="Q9LPQ3"/>
<dbReference type="PRO" id="PR:Q9LPQ3"/>
<dbReference type="Proteomes" id="UP000006548">
    <property type="component" value="Chromosome 1"/>
</dbReference>
<dbReference type="ExpressionAtlas" id="Q9LPQ3">
    <property type="expression patterns" value="baseline and differential"/>
</dbReference>
<dbReference type="GO" id="GO:0005524">
    <property type="term" value="F:ATP binding"/>
    <property type="evidence" value="ECO:0007669"/>
    <property type="project" value="UniProtKB-KW"/>
</dbReference>
<dbReference type="GO" id="GO:0016301">
    <property type="term" value="F:kinase activity"/>
    <property type="evidence" value="ECO:0000314"/>
    <property type="project" value="TAIR"/>
</dbReference>
<dbReference type="GO" id="GO:0004708">
    <property type="term" value="F:MAP kinase kinase activity"/>
    <property type="evidence" value="ECO:0000304"/>
    <property type="project" value="TAIR"/>
</dbReference>
<dbReference type="GO" id="GO:0106310">
    <property type="term" value="F:protein serine kinase activity"/>
    <property type="evidence" value="ECO:0007669"/>
    <property type="project" value="RHEA"/>
</dbReference>
<dbReference type="GO" id="GO:0004674">
    <property type="term" value="F:protein serine/threonine kinase activity"/>
    <property type="evidence" value="ECO:0007669"/>
    <property type="project" value="UniProtKB-KW"/>
</dbReference>
<dbReference type="GO" id="GO:0004713">
    <property type="term" value="F:protein tyrosine kinase activity"/>
    <property type="evidence" value="ECO:0007669"/>
    <property type="project" value="RHEA"/>
</dbReference>
<dbReference type="GO" id="GO:0009926">
    <property type="term" value="P:auxin polar transport"/>
    <property type="evidence" value="ECO:0000315"/>
    <property type="project" value="TAIR"/>
</dbReference>
<dbReference type="GO" id="GO:0042742">
    <property type="term" value="P:defense response to bacterium"/>
    <property type="evidence" value="ECO:0000315"/>
    <property type="project" value="TAIR"/>
</dbReference>
<dbReference type="GO" id="GO:0002229">
    <property type="term" value="P:defense response to oomycetes"/>
    <property type="evidence" value="ECO:0000315"/>
    <property type="project" value="TAIR"/>
</dbReference>
<dbReference type="GO" id="GO:0009875">
    <property type="term" value="P:pollen-pistil interaction"/>
    <property type="evidence" value="ECO:0000316"/>
    <property type="project" value="TAIR"/>
</dbReference>
<dbReference type="GO" id="GO:0009862">
    <property type="term" value="P:systemic acquired resistance, salicylic acid mediated signaling pathway"/>
    <property type="evidence" value="ECO:0000315"/>
    <property type="project" value="TAIR"/>
</dbReference>
<dbReference type="CDD" id="cd06623">
    <property type="entry name" value="PKc_MAPKK_plant_like"/>
    <property type="match status" value="1"/>
</dbReference>
<dbReference type="FunFam" id="1.10.510.10:FF:000350">
    <property type="entry name" value="Mitogen-activated protein kinase 2"/>
    <property type="match status" value="1"/>
</dbReference>
<dbReference type="FunFam" id="3.30.200.20:FF:000732">
    <property type="entry name" value="Mitogen-activated protein kinase kinase"/>
    <property type="match status" value="1"/>
</dbReference>
<dbReference type="Gene3D" id="3.30.200.20">
    <property type="entry name" value="Phosphorylase Kinase, domain 1"/>
    <property type="match status" value="1"/>
</dbReference>
<dbReference type="Gene3D" id="1.10.510.10">
    <property type="entry name" value="Transferase(Phosphotransferase) domain 1"/>
    <property type="match status" value="1"/>
</dbReference>
<dbReference type="InterPro" id="IPR011009">
    <property type="entry name" value="Kinase-like_dom_sf"/>
</dbReference>
<dbReference type="InterPro" id="IPR000719">
    <property type="entry name" value="Prot_kinase_dom"/>
</dbReference>
<dbReference type="InterPro" id="IPR017441">
    <property type="entry name" value="Protein_kinase_ATP_BS"/>
</dbReference>
<dbReference type="InterPro" id="IPR001245">
    <property type="entry name" value="Ser-Thr/Tyr_kinase_cat_dom"/>
</dbReference>
<dbReference type="InterPro" id="IPR008271">
    <property type="entry name" value="Ser/Thr_kinase_AS"/>
</dbReference>
<dbReference type="PANTHER" id="PTHR48013:SF9">
    <property type="entry name" value="DUAL SPECIFICITY MITOGEN-ACTIVATED PROTEIN KINASE KINASE 5"/>
    <property type="match status" value="1"/>
</dbReference>
<dbReference type="PANTHER" id="PTHR48013">
    <property type="entry name" value="DUAL SPECIFICITY MITOGEN-ACTIVATED PROTEIN KINASE KINASE 5-RELATED"/>
    <property type="match status" value="1"/>
</dbReference>
<dbReference type="Pfam" id="PF00069">
    <property type="entry name" value="Pkinase"/>
    <property type="match status" value="1"/>
</dbReference>
<dbReference type="PRINTS" id="PR00109">
    <property type="entry name" value="TYRKINASE"/>
</dbReference>
<dbReference type="SMART" id="SM00220">
    <property type="entry name" value="S_TKc"/>
    <property type="match status" value="1"/>
</dbReference>
<dbReference type="SUPFAM" id="SSF56112">
    <property type="entry name" value="Protein kinase-like (PK-like)"/>
    <property type="match status" value="1"/>
</dbReference>
<dbReference type="PROSITE" id="PS00107">
    <property type="entry name" value="PROTEIN_KINASE_ATP"/>
    <property type="match status" value="1"/>
</dbReference>
<dbReference type="PROSITE" id="PS50011">
    <property type="entry name" value="PROTEIN_KINASE_DOM"/>
    <property type="match status" value="1"/>
</dbReference>
<dbReference type="PROSITE" id="PS00108">
    <property type="entry name" value="PROTEIN_KINASE_ST"/>
    <property type="match status" value="1"/>
</dbReference>
<proteinExistence type="evidence at protein level"/>
<sequence length="307" mass="34272">MALVRKRRQINLRLPVPPLSVHLPWFSFASSTAPVINNGISASDVEKLHVLGRGSSGIVYKVHHKTTGEIYALKSVNGDMSPAFTRQLAREMEILRRTDSPYVVRCQGIFEKPIVGEVSILMEYMDGGNLESLRGAVTEKQLAGFSRQILKGLSYLHSLKIVHRDIKPANLLLNSRNEVKIADFGVSKIITRSLDYCNSYVGTCAYMSPERFDSAAGENSDVYAGDIWSFGVMILELFVGHFPLLPQGQRPDWATLMCVVCFGEPPRAPEGCSDEFRSFVDCCLRKESSERWTASQLLGHPFLRESL</sequence>
<organism>
    <name type="scientific">Arabidopsis thaliana</name>
    <name type="common">Mouse-ear cress</name>
    <dbReference type="NCBI Taxonomy" id="3702"/>
    <lineage>
        <taxon>Eukaryota</taxon>
        <taxon>Viridiplantae</taxon>
        <taxon>Streptophyta</taxon>
        <taxon>Embryophyta</taxon>
        <taxon>Tracheophyta</taxon>
        <taxon>Spermatophyta</taxon>
        <taxon>Magnoliopsida</taxon>
        <taxon>eudicotyledons</taxon>
        <taxon>Gunneridae</taxon>
        <taxon>Pentapetalae</taxon>
        <taxon>rosids</taxon>
        <taxon>malvids</taxon>
        <taxon>Brassicales</taxon>
        <taxon>Brassicaceae</taxon>
        <taxon>Camelineae</taxon>
        <taxon>Arabidopsis</taxon>
    </lineage>
</organism>
<gene>
    <name type="primary">MKK7</name>
    <name type="synonym">BUD1</name>
    <name type="ordered locus">At1g18350</name>
    <name type="ORF">F15H18.14</name>
</gene>
<reference key="1">
    <citation type="journal article" date="2006" name="Plant Cell">
        <title>Increased expression of MAP KINASE KINASE7 causes deficiency in polar auxin transport and leads to plant architectural abnormality in Arabidopsis.</title>
        <authorList>
            <person name="Dai Y."/>
            <person name="Wang H."/>
            <person name="Li B."/>
            <person name="Huang J."/>
            <person name="Liu X."/>
            <person name="Zhou Y."/>
            <person name="Mou Z."/>
            <person name="Li J."/>
        </authorList>
    </citation>
    <scope>NUCLEOTIDE SEQUENCE [MRNA]</scope>
    <scope>FUNCTION</scope>
    <scope>MUTANT BUD1</scope>
    <scope>TISSUE SPECIFICITY</scope>
    <scope>MUTAGENESIS OF LYS-74</scope>
</reference>
<reference key="2">
    <citation type="journal article" date="2000" name="Nature">
        <title>Sequence and analysis of chromosome 1 of the plant Arabidopsis thaliana.</title>
        <authorList>
            <person name="Theologis A."/>
            <person name="Ecker J.R."/>
            <person name="Palm C.J."/>
            <person name="Federspiel N.A."/>
            <person name="Kaul S."/>
            <person name="White O."/>
            <person name="Alonso J."/>
            <person name="Altafi H."/>
            <person name="Araujo R."/>
            <person name="Bowman C.L."/>
            <person name="Brooks S.Y."/>
            <person name="Buehler E."/>
            <person name="Chan A."/>
            <person name="Chao Q."/>
            <person name="Chen H."/>
            <person name="Cheuk R.F."/>
            <person name="Chin C.W."/>
            <person name="Chung M.K."/>
            <person name="Conn L."/>
            <person name="Conway A.B."/>
            <person name="Conway A.R."/>
            <person name="Creasy T.H."/>
            <person name="Dewar K."/>
            <person name="Dunn P."/>
            <person name="Etgu P."/>
            <person name="Feldblyum T.V."/>
            <person name="Feng J.-D."/>
            <person name="Fong B."/>
            <person name="Fujii C.Y."/>
            <person name="Gill J.E."/>
            <person name="Goldsmith A.D."/>
            <person name="Haas B."/>
            <person name="Hansen N.F."/>
            <person name="Hughes B."/>
            <person name="Huizar L."/>
            <person name="Hunter J.L."/>
            <person name="Jenkins J."/>
            <person name="Johnson-Hopson C."/>
            <person name="Khan S."/>
            <person name="Khaykin E."/>
            <person name="Kim C.J."/>
            <person name="Koo H.L."/>
            <person name="Kremenetskaia I."/>
            <person name="Kurtz D.B."/>
            <person name="Kwan A."/>
            <person name="Lam B."/>
            <person name="Langin-Hooper S."/>
            <person name="Lee A."/>
            <person name="Lee J.M."/>
            <person name="Lenz C.A."/>
            <person name="Li J.H."/>
            <person name="Li Y.-P."/>
            <person name="Lin X."/>
            <person name="Liu S.X."/>
            <person name="Liu Z.A."/>
            <person name="Luros J.S."/>
            <person name="Maiti R."/>
            <person name="Marziali A."/>
            <person name="Militscher J."/>
            <person name="Miranda M."/>
            <person name="Nguyen M."/>
            <person name="Nierman W.C."/>
            <person name="Osborne B.I."/>
            <person name="Pai G."/>
            <person name="Peterson J."/>
            <person name="Pham P.K."/>
            <person name="Rizzo M."/>
            <person name="Rooney T."/>
            <person name="Rowley D."/>
            <person name="Sakano H."/>
            <person name="Salzberg S.L."/>
            <person name="Schwartz J.R."/>
            <person name="Shinn P."/>
            <person name="Southwick A.M."/>
            <person name="Sun H."/>
            <person name="Tallon L.J."/>
            <person name="Tambunga G."/>
            <person name="Toriumi M.J."/>
            <person name="Town C.D."/>
            <person name="Utterback T."/>
            <person name="Van Aken S."/>
            <person name="Vaysberg M."/>
            <person name="Vysotskaia V.S."/>
            <person name="Walker M."/>
            <person name="Wu D."/>
            <person name="Yu G."/>
            <person name="Fraser C.M."/>
            <person name="Venter J.C."/>
            <person name="Davis R.W."/>
        </authorList>
    </citation>
    <scope>NUCLEOTIDE SEQUENCE [LARGE SCALE GENOMIC DNA]</scope>
    <source>
        <strain>cv. Columbia</strain>
    </source>
</reference>
<reference key="3">
    <citation type="journal article" date="2017" name="Plant J.">
        <title>Araport11: a complete reannotation of the Arabidopsis thaliana reference genome.</title>
        <authorList>
            <person name="Cheng C.Y."/>
            <person name="Krishnakumar V."/>
            <person name="Chan A.P."/>
            <person name="Thibaud-Nissen F."/>
            <person name="Schobel S."/>
            <person name="Town C.D."/>
        </authorList>
    </citation>
    <scope>GENOME REANNOTATION</scope>
    <source>
        <strain>cv. Columbia</strain>
    </source>
</reference>
<reference key="4">
    <citation type="journal article" date="2006" name="Plant Biotechnol. J.">
        <title>Simultaneous high-throughput recombinational cloning of open reading frames in closed and open configurations.</title>
        <authorList>
            <person name="Underwood B.A."/>
            <person name="Vanderhaeghen R."/>
            <person name="Whitford R."/>
            <person name="Town C.D."/>
            <person name="Hilson P."/>
        </authorList>
    </citation>
    <scope>NUCLEOTIDE SEQUENCE [LARGE SCALE MRNA]</scope>
    <source>
        <strain>cv. Columbia</strain>
    </source>
</reference>
<reference key="5">
    <citation type="journal article" date="2002" name="Trends Plant Sci.">
        <title>Mitogen-activated protein kinase cascades in plants: a new nomenclature.</title>
        <authorList>
            <consortium name="MAPK group"/>
        </authorList>
    </citation>
    <scope>GENE FAMILY</scope>
    <scope>NOMENCLATURE</scope>
</reference>
<reference key="6">
    <citation type="journal article" date="2006" name="Trends Plant Sci.">
        <title>Ancient signals: comparative genomics of plant MAPK and MAPKK gene families.</title>
        <authorList>
            <person name="Hamel L.P."/>
            <person name="Nicole M.C."/>
            <person name="Sritubtim S."/>
            <person name="Morency M.J."/>
            <person name="Ellis M."/>
            <person name="Ehlting J."/>
            <person name="Beaudoin N."/>
            <person name="Barbazuk B."/>
            <person name="Klessig D."/>
            <person name="Lee J."/>
            <person name="Martin G."/>
            <person name="Mundy J."/>
            <person name="Ohashi Y."/>
            <person name="Scheel D."/>
            <person name="Sheen J."/>
            <person name="Xing T."/>
            <person name="Zhang S."/>
            <person name="Seguin A."/>
            <person name="Ellis B.E."/>
        </authorList>
    </citation>
    <scope>GENE FAMILY</scope>
</reference>
<reference key="7">
    <citation type="journal article" date="2007" name="Plant J.">
        <title>Overexpression of Arabidopsis MAP kinase kinase 7 leads to activation of plant basal and systemic acquired resistance.</title>
        <authorList>
            <person name="Zhang X."/>
            <person name="Dai Y."/>
            <person name="Xiong Y."/>
            <person name="DeFraia C."/>
            <person name="Li J."/>
            <person name="Dong X."/>
            <person name="Mou Z."/>
        </authorList>
    </citation>
    <scope>FUNCTION</scope>
    <scope>INDUCTION BY PATHOGEN</scope>
</reference>
<reference key="8">
    <citation type="journal article" date="2008" name="Nature">
        <title>Dual control of nuclear EIN3 by bifurcate MAPK cascades in C2H4 signalling.</title>
        <authorList>
            <person name="Yoo S.D."/>
            <person name="Cho Y.H."/>
            <person name="Tena G."/>
            <person name="Xiong Y."/>
            <person name="Sheen J."/>
        </authorList>
    </citation>
    <scope>FUNCTION</scope>
</reference>
<reference key="9">
    <citation type="journal article" date="2008" name="Plant Signal. Behav.">
        <title>The Arabidopsis MAP kinase kinase 7: A crosstalk point between auxin signaling and defense responses?</title>
        <authorList>
            <person name="Zhang X."/>
            <person name="Xiong Y."/>
            <person name="Defraia C."/>
            <person name="Schmelz E."/>
            <person name="Mou Z."/>
        </authorList>
    </citation>
    <scope>REVIEW</scope>
</reference>
<reference key="10">
    <citation type="journal article" date="2008" name="Plant Signal. Behav.">
        <title>Comprehensive analysis of protein-protein interactions between Arabidopsis MAPKs and MAPK kinases helps define potential MAPK signalling modules.</title>
        <authorList>
            <person name="Lee J.S."/>
            <person name="Huh K.W."/>
            <person name="Bhargava A."/>
            <person name="Ellis B.E."/>
        </authorList>
    </citation>
    <scope>INTERACTION WITH MPK15</scope>
</reference>
<accession>Q9LPQ3</accession>
<accession>A0ME75</accession>
<comment type="function">
    <text evidence="6 7 8">May function as a negative regulator of polar auxin transport. Positively regulates plant basal and systemic acquired resistance (SAR). Activates MPK3 and MPK6 in vitro.</text>
</comment>
<comment type="catalytic activity">
    <reaction>
        <text>L-seryl-[protein] + ATP = O-phospho-L-seryl-[protein] + ADP + H(+)</text>
        <dbReference type="Rhea" id="RHEA:17989"/>
        <dbReference type="Rhea" id="RHEA-COMP:9863"/>
        <dbReference type="Rhea" id="RHEA-COMP:11604"/>
        <dbReference type="ChEBI" id="CHEBI:15378"/>
        <dbReference type="ChEBI" id="CHEBI:29999"/>
        <dbReference type="ChEBI" id="CHEBI:30616"/>
        <dbReference type="ChEBI" id="CHEBI:83421"/>
        <dbReference type="ChEBI" id="CHEBI:456216"/>
        <dbReference type="EC" id="2.7.12.2"/>
    </reaction>
</comment>
<comment type="catalytic activity">
    <reaction>
        <text>L-threonyl-[protein] + ATP = O-phospho-L-threonyl-[protein] + ADP + H(+)</text>
        <dbReference type="Rhea" id="RHEA:46608"/>
        <dbReference type="Rhea" id="RHEA-COMP:11060"/>
        <dbReference type="Rhea" id="RHEA-COMP:11605"/>
        <dbReference type="ChEBI" id="CHEBI:15378"/>
        <dbReference type="ChEBI" id="CHEBI:30013"/>
        <dbReference type="ChEBI" id="CHEBI:30616"/>
        <dbReference type="ChEBI" id="CHEBI:61977"/>
        <dbReference type="ChEBI" id="CHEBI:456216"/>
        <dbReference type="EC" id="2.7.12.2"/>
    </reaction>
</comment>
<comment type="catalytic activity">
    <reaction>
        <text>L-tyrosyl-[protein] + ATP = O-phospho-L-tyrosyl-[protein] + ADP + H(+)</text>
        <dbReference type="Rhea" id="RHEA:10596"/>
        <dbReference type="Rhea" id="RHEA-COMP:10136"/>
        <dbReference type="Rhea" id="RHEA-COMP:20101"/>
        <dbReference type="ChEBI" id="CHEBI:15378"/>
        <dbReference type="ChEBI" id="CHEBI:30616"/>
        <dbReference type="ChEBI" id="CHEBI:46858"/>
        <dbReference type="ChEBI" id="CHEBI:61978"/>
        <dbReference type="ChEBI" id="CHEBI:456216"/>
        <dbReference type="EC" id="2.7.12.2"/>
    </reaction>
</comment>
<comment type="subunit">
    <text evidence="9">Interacts with MPK15.</text>
</comment>
<comment type="interaction">
    <interactant intactId="EBI-2128593">
        <id>Q9LPQ3</id>
    </interactant>
    <interactant intactId="EBI-1536925">
        <id>Q9FYK5</id>
        <label>ESR2</label>
    </interactant>
    <organismsDiffer>false</organismsDiffer>
    <experiments>3</experiments>
</comment>
<comment type="interaction">
    <interactant intactId="EBI-2128593">
        <id>Q9LPQ3</id>
    </interactant>
    <interactant intactId="EBI-1393382">
        <id>O64682</id>
        <label>PID</label>
    </interactant>
    <organismsDiffer>false</organismsDiffer>
    <experiments>3</experiments>
</comment>
<comment type="interaction">
    <interactant intactId="EBI-2128593">
        <id>Q9LPQ3</id>
    </interactant>
    <interactant intactId="EBI-25512884">
        <id>Q9LNV3</id>
        <label>STP2</label>
    </interactant>
    <organismsDiffer>false</organismsDiffer>
    <experiments>3</experiments>
</comment>
<comment type="interaction">
    <interactant intactId="EBI-2128593">
        <id>Q9LPQ3</id>
    </interactant>
    <interactant intactId="EBI-15192297">
        <id>Q9LQF0</id>
        <label>TCP23</label>
    </interactant>
    <organismsDiffer>false</organismsDiffer>
    <experiments>3</experiments>
</comment>
<comment type="interaction">
    <interactant intactId="EBI-2128593">
        <id>Q9LPQ3</id>
    </interactant>
    <interactant intactId="EBI-4426557">
        <id>Q84MB2</id>
        <label>TIFY8</label>
    </interactant>
    <organismsDiffer>false</organismsDiffer>
    <experiments>3</experiments>
</comment>
<comment type="interaction">
    <interactant intactId="EBI-2128593">
        <id>Q9LPQ3</id>
    </interactant>
    <interactant intactId="EBI-15193683">
        <id>Q5CCK4</id>
        <label>VAL2</label>
    </interactant>
    <organismsDiffer>false</organismsDiffer>
    <experiments>5</experiments>
</comment>
<comment type="tissue specificity">
    <text evidence="6">Expressed in all tissues, with a relatively higher level in leaves and lower level in roots and flowers.</text>
</comment>
<comment type="induction">
    <text evidence="7">By Pseudomonas syringae pv. tomato (Pst) DC3000/avrRpt2 infection.</text>
</comment>
<comment type="PTM">
    <text evidence="1">Phosphorylation at Ser-193 and Ser-199 by MAP kinase kinase kinases positively regulates kinase activity.</text>
</comment>
<comment type="miscellaneous">
    <text evidence="11 12">Overexpression of MKK5 (mutant bud1) causes deficiency in polar auxin transport and leads to plant architectural abnormality (PubMed:16377756). The bud1 mutant accumulates elevated levels of SA, and exhibits constitutive PR gene expression and enhanced resistance to both bacterial and oomycete pathogens (PubMed:17908155).</text>
</comment>
<comment type="similarity">
    <text evidence="10">Belongs to the protein kinase superfamily. STE Ser/Thr protein kinase family. MAP kinase kinase subfamily.</text>
</comment>
<comment type="sequence caution" evidence="10">
    <conflict type="erroneous termination">
        <sequence resource="EMBL-CDS" id="ABK28402"/>
    </conflict>
    <text>Extended C-terminus.</text>
</comment>
<evidence type="ECO:0000250" key="1"/>
<evidence type="ECO:0000250" key="2">
    <source>
        <dbReference type="UniProtKB" id="O80396"/>
    </source>
</evidence>
<evidence type="ECO:0000250" key="3">
    <source>
        <dbReference type="UniProtKB" id="O80397"/>
    </source>
</evidence>
<evidence type="ECO:0000255" key="4">
    <source>
        <dbReference type="PROSITE-ProRule" id="PRU00159"/>
    </source>
</evidence>
<evidence type="ECO:0000255" key="5">
    <source>
        <dbReference type="PROSITE-ProRule" id="PRU10027"/>
    </source>
</evidence>
<evidence type="ECO:0000269" key="6">
    <source>
    </source>
</evidence>
<evidence type="ECO:0000269" key="7">
    <source>
    </source>
</evidence>
<evidence type="ECO:0000269" key="8">
    <source>
    </source>
</evidence>
<evidence type="ECO:0000269" key="9">
    <source>
    </source>
</evidence>
<evidence type="ECO:0000305" key="10"/>
<evidence type="ECO:0000305" key="11">
    <source>
    </source>
</evidence>
<evidence type="ECO:0000305" key="12">
    <source>
    </source>
</evidence>